<organism>
    <name type="scientific">Saccharophagus degradans (strain 2-40 / ATCC 43961 / DSM 17024)</name>
    <dbReference type="NCBI Taxonomy" id="203122"/>
    <lineage>
        <taxon>Bacteria</taxon>
        <taxon>Pseudomonadati</taxon>
        <taxon>Pseudomonadota</taxon>
        <taxon>Gammaproteobacteria</taxon>
        <taxon>Cellvibrionales</taxon>
        <taxon>Cellvibrionaceae</taxon>
        <taxon>Saccharophagus</taxon>
    </lineage>
</organism>
<gene>
    <name evidence="1" type="primary">metG</name>
    <name type="ordered locus">Sde_2398</name>
</gene>
<name>SYM_SACD2</name>
<feature type="chain" id="PRO_0000331894" description="Methionine--tRNA ligase">
    <location>
        <begin position="1"/>
        <end position="677"/>
    </location>
</feature>
<feature type="domain" description="tRNA-binding" evidence="1">
    <location>
        <begin position="576"/>
        <end position="677"/>
    </location>
</feature>
<feature type="short sequence motif" description="'HIGH' region">
    <location>
        <begin position="14"/>
        <end position="24"/>
    </location>
</feature>
<feature type="short sequence motif" description="'KMSKS' region">
    <location>
        <begin position="330"/>
        <end position="334"/>
    </location>
</feature>
<feature type="binding site" evidence="1">
    <location>
        <position position="145"/>
    </location>
    <ligand>
        <name>Zn(2+)</name>
        <dbReference type="ChEBI" id="CHEBI:29105"/>
    </ligand>
</feature>
<feature type="binding site" evidence="1">
    <location>
        <position position="148"/>
    </location>
    <ligand>
        <name>Zn(2+)</name>
        <dbReference type="ChEBI" id="CHEBI:29105"/>
    </ligand>
</feature>
<feature type="binding site" evidence="1">
    <location>
        <position position="158"/>
    </location>
    <ligand>
        <name>Zn(2+)</name>
        <dbReference type="ChEBI" id="CHEBI:29105"/>
    </ligand>
</feature>
<feature type="binding site" evidence="1">
    <location>
        <position position="161"/>
    </location>
    <ligand>
        <name>Zn(2+)</name>
        <dbReference type="ChEBI" id="CHEBI:29105"/>
    </ligand>
</feature>
<feature type="binding site" evidence="1">
    <location>
        <position position="333"/>
    </location>
    <ligand>
        <name>ATP</name>
        <dbReference type="ChEBI" id="CHEBI:30616"/>
    </ligand>
</feature>
<dbReference type="EC" id="6.1.1.10" evidence="1"/>
<dbReference type="EMBL" id="CP000282">
    <property type="protein sequence ID" value="ABD81658.1"/>
    <property type="molecule type" value="Genomic_DNA"/>
</dbReference>
<dbReference type="RefSeq" id="WP_011468875.1">
    <property type="nucleotide sequence ID" value="NC_007912.1"/>
</dbReference>
<dbReference type="SMR" id="Q21I21"/>
<dbReference type="STRING" id="203122.Sde_2398"/>
<dbReference type="GeneID" id="98614062"/>
<dbReference type="KEGG" id="sde:Sde_2398"/>
<dbReference type="eggNOG" id="COG0073">
    <property type="taxonomic scope" value="Bacteria"/>
</dbReference>
<dbReference type="eggNOG" id="COG0143">
    <property type="taxonomic scope" value="Bacteria"/>
</dbReference>
<dbReference type="HOGENOM" id="CLU_009710_7_0_6"/>
<dbReference type="OrthoDB" id="9810191at2"/>
<dbReference type="Proteomes" id="UP000001947">
    <property type="component" value="Chromosome"/>
</dbReference>
<dbReference type="GO" id="GO:0005829">
    <property type="term" value="C:cytosol"/>
    <property type="evidence" value="ECO:0007669"/>
    <property type="project" value="TreeGrafter"/>
</dbReference>
<dbReference type="GO" id="GO:0005524">
    <property type="term" value="F:ATP binding"/>
    <property type="evidence" value="ECO:0007669"/>
    <property type="project" value="UniProtKB-UniRule"/>
</dbReference>
<dbReference type="GO" id="GO:0046872">
    <property type="term" value="F:metal ion binding"/>
    <property type="evidence" value="ECO:0007669"/>
    <property type="project" value="UniProtKB-KW"/>
</dbReference>
<dbReference type="GO" id="GO:0004825">
    <property type="term" value="F:methionine-tRNA ligase activity"/>
    <property type="evidence" value="ECO:0007669"/>
    <property type="project" value="UniProtKB-UniRule"/>
</dbReference>
<dbReference type="GO" id="GO:0000049">
    <property type="term" value="F:tRNA binding"/>
    <property type="evidence" value="ECO:0007669"/>
    <property type="project" value="UniProtKB-KW"/>
</dbReference>
<dbReference type="GO" id="GO:0006431">
    <property type="term" value="P:methionyl-tRNA aminoacylation"/>
    <property type="evidence" value="ECO:0007669"/>
    <property type="project" value="UniProtKB-UniRule"/>
</dbReference>
<dbReference type="CDD" id="cd07957">
    <property type="entry name" value="Anticodon_Ia_Met"/>
    <property type="match status" value="1"/>
</dbReference>
<dbReference type="CDD" id="cd00814">
    <property type="entry name" value="MetRS_core"/>
    <property type="match status" value="1"/>
</dbReference>
<dbReference type="CDD" id="cd02800">
    <property type="entry name" value="tRNA_bind_EcMetRS_like"/>
    <property type="match status" value="1"/>
</dbReference>
<dbReference type="FunFam" id="1.10.730.10:FF:000005">
    <property type="entry name" value="Methionine--tRNA ligase"/>
    <property type="match status" value="1"/>
</dbReference>
<dbReference type="FunFam" id="2.20.28.20:FF:000001">
    <property type="entry name" value="Methionine--tRNA ligase"/>
    <property type="match status" value="1"/>
</dbReference>
<dbReference type="FunFam" id="2.40.50.140:FF:000042">
    <property type="entry name" value="Methionine--tRNA ligase"/>
    <property type="match status" value="1"/>
</dbReference>
<dbReference type="Gene3D" id="3.40.50.620">
    <property type="entry name" value="HUPs"/>
    <property type="match status" value="1"/>
</dbReference>
<dbReference type="Gene3D" id="1.10.730.10">
    <property type="entry name" value="Isoleucyl-tRNA Synthetase, Domain 1"/>
    <property type="match status" value="1"/>
</dbReference>
<dbReference type="Gene3D" id="2.20.28.20">
    <property type="entry name" value="Methionyl-tRNA synthetase, Zn-domain"/>
    <property type="match status" value="1"/>
</dbReference>
<dbReference type="Gene3D" id="2.40.50.140">
    <property type="entry name" value="Nucleic acid-binding proteins"/>
    <property type="match status" value="1"/>
</dbReference>
<dbReference type="HAMAP" id="MF_00098">
    <property type="entry name" value="Met_tRNA_synth_type1"/>
    <property type="match status" value="1"/>
</dbReference>
<dbReference type="InterPro" id="IPR001412">
    <property type="entry name" value="aa-tRNA-synth_I_CS"/>
</dbReference>
<dbReference type="InterPro" id="IPR041872">
    <property type="entry name" value="Anticodon_Met"/>
</dbReference>
<dbReference type="InterPro" id="IPR004495">
    <property type="entry name" value="Met-tRNA-synth_bsu_C"/>
</dbReference>
<dbReference type="InterPro" id="IPR023458">
    <property type="entry name" value="Met-tRNA_ligase_1"/>
</dbReference>
<dbReference type="InterPro" id="IPR014758">
    <property type="entry name" value="Met-tRNA_synth"/>
</dbReference>
<dbReference type="InterPro" id="IPR015413">
    <property type="entry name" value="Methionyl/Leucyl_tRNA_Synth"/>
</dbReference>
<dbReference type="InterPro" id="IPR033911">
    <property type="entry name" value="MetRS_core"/>
</dbReference>
<dbReference type="InterPro" id="IPR029038">
    <property type="entry name" value="MetRS_Zn"/>
</dbReference>
<dbReference type="InterPro" id="IPR012340">
    <property type="entry name" value="NA-bd_OB-fold"/>
</dbReference>
<dbReference type="InterPro" id="IPR014729">
    <property type="entry name" value="Rossmann-like_a/b/a_fold"/>
</dbReference>
<dbReference type="InterPro" id="IPR002547">
    <property type="entry name" value="tRNA-bd_dom"/>
</dbReference>
<dbReference type="InterPro" id="IPR009080">
    <property type="entry name" value="tRNAsynth_Ia_anticodon-bd"/>
</dbReference>
<dbReference type="NCBIfam" id="TIGR00398">
    <property type="entry name" value="metG"/>
    <property type="match status" value="1"/>
</dbReference>
<dbReference type="NCBIfam" id="TIGR00399">
    <property type="entry name" value="metG_C_term"/>
    <property type="match status" value="1"/>
</dbReference>
<dbReference type="NCBIfam" id="NF001100">
    <property type="entry name" value="PRK00133.1"/>
    <property type="match status" value="1"/>
</dbReference>
<dbReference type="PANTHER" id="PTHR45765">
    <property type="entry name" value="METHIONINE--TRNA LIGASE"/>
    <property type="match status" value="1"/>
</dbReference>
<dbReference type="PANTHER" id="PTHR45765:SF1">
    <property type="entry name" value="METHIONINE--TRNA LIGASE, CYTOPLASMIC"/>
    <property type="match status" value="1"/>
</dbReference>
<dbReference type="Pfam" id="PF19303">
    <property type="entry name" value="Anticodon_3"/>
    <property type="match status" value="1"/>
</dbReference>
<dbReference type="Pfam" id="PF09334">
    <property type="entry name" value="tRNA-synt_1g"/>
    <property type="match status" value="1"/>
</dbReference>
<dbReference type="Pfam" id="PF01588">
    <property type="entry name" value="tRNA_bind"/>
    <property type="match status" value="1"/>
</dbReference>
<dbReference type="PRINTS" id="PR01041">
    <property type="entry name" value="TRNASYNTHMET"/>
</dbReference>
<dbReference type="SUPFAM" id="SSF47323">
    <property type="entry name" value="Anticodon-binding domain of a subclass of class I aminoacyl-tRNA synthetases"/>
    <property type="match status" value="1"/>
</dbReference>
<dbReference type="SUPFAM" id="SSF57770">
    <property type="entry name" value="Methionyl-tRNA synthetase (MetRS), Zn-domain"/>
    <property type="match status" value="1"/>
</dbReference>
<dbReference type="SUPFAM" id="SSF50249">
    <property type="entry name" value="Nucleic acid-binding proteins"/>
    <property type="match status" value="1"/>
</dbReference>
<dbReference type="SUPFAM" id="SSF52374">
    <property type="entry name" value="Nucleotidylyl transferase"/>
    <property type="match status" value="1"/>
</dbReference>
<dbReference type="PROSITE" id="PS00178">
    <property type="entry name" value="AA_TRNA_LIGASE_I"/>
    <property type="match status" value="1"/>
</dbReference>
<dbReference type="PROSITE" id="PS50886">
    <property type="entry name" value="TRBD"/>
    <property type="match status" value="1"/>
</dbReference>
<protein>
    <recommendedName>
        <fullName evidence="1">Methionine--tRNA ligase</fullName>
        <ecNumber evidence="1">6.1.1.10</ecNumber>
    </recommendedName>
    <alternativeName>
        <fullName evidence="1">Methionyl-tRNA synthetase</fullName>
        <shortName evidence="1">MetRS</shortName>
    </alternativeName>
</protein>
<reference key="1">
    <citation type="journal article" date="2008" name="PLoS Genet.">
        <title>Complete genome sequence of the complex carbohydrate-degrading marine bacterium, Saccharophagus degradans strain 2-40 T.</title>
        <authorList>
            <person name="Weiner R.M."/>
            <person name="Taylor L.E. II"/>
            <person name="Henrissat B."/>
            <person name="Hauser L."/>
            <person name="Land M."/>
            <person name="Coutinho P.M."/>
            <person name="Rancurel C."/>
            <person name="Saunders E.H."/>
            <person name="Longmire A.G."/>
            <person name="Zhang H."/>
            <person name="Bayer E.A."/>
            <person name="Gilbert H.J."/>
            <person name="Larimer F."/>
            <person name="Zhulin I.B."/>
            <person name="Ekborg N.A."/>
            <person name="Lamed R."/>
            <person name="Richardson P.M."/>
            <person name="Borovok I."/>
            <person name="Hutcheson S."/>
        </authorList>
    </citation>
    <scope>NUCLEOTIDE SEQUENCE [LARGE SCALE GENOMIC DNA]</scope>
    <source>
        <strain>2-40 / ATCC 43961 / DSM 17024</strain>
    </source>
</reference>
<sequence>MTNKRQILVTSALPYANGAIHLGHMVETIQTDIWVRFQKMQGHDCTYVCADDAHGTAIMLRAEQLGVTAEEQIAKVKADHEADFKDFLIGFDNYHSTHSEENKALSHLIYERVKANGHIAERSITQAFDPEKNLFLADRYIKGTCPKCGAEDQYGDNCENCSATYSPMELKNPRSVISGATPVAKESVHYFFTLPEFTGYLKEWTRAGHLQDEVANKLAEWLDAGLQEWDISRDAPYFGFEIPGAPGKYFYVWLDAPIGYMASFKQLCDRTGKDFDEYWKADSNCELYHFIGKDIVNFHALFWPALLSDAGFRTPTKVCVHGFLTVDGKKMSKSRGTFINARTYLDHLQPEYLRYYYAAKLTGSVDDIDLNLEDFVQRVNSDLVGKVVNIASRTAKFVQKAGGALSANIINEELWQSFVKAGDVIAAHYENRDYSKAMREIMALADLANEFIAEQAPWALAKQEGNEQKVLDVCSLGINCFRAIMTYLKPVLPQTAVAAEEFLGTELTWTGPLSFLGEHTINKFKPLMTRIEGEKIEAMINDSKEATAAMAKTIAEPAADSPLAKEPIADEIEFADFAKVDLRVALIANAEHVEGADKLLRLTLDLGGETRNVFAGIKSAYLPEDLIGKHTIMVANLKPRKMKFGMSEGMVLAAGPGGKELYILEPHEGALPGMRVM</sequence>
<proteinExistence type="inferred from homology"/>
<keyword id="KW-0030">Aminoacyl-tRNA synthetase</keyword>
<keyword id="KW-0067">ATP-binding</keyword>
<keyword id="KW-0963">Cytoplasm</keyword>
<keyword id="KW-0436">Ligase</keyword>
<keyword id="KW-0479">Metal-binding</keyword>
<keyword id="KW-0547">Nucleotide-binding</keyword>
<keyword id="KW-0648">Protein biosynthesis</keyword>
<keyword id="KW-1185">Reference proteome</keyword>
<keyword id="KW-0694">RNA-binding</keyword>
<keyword id="KW-0820">tRNA-binding</keyword>
<keyword id="KW-0862">Zinc</keyword>
<comment type="function">
    <text evidence="1">Is required not only for elongation of protein synthesis but also for the initiation of all mRNA translation through initiator tRNA(fMet) aminoacylation.</text>
</comment>
<comment type="catalytic activity">
    <reaction evidence="1">
        <text>tRNA(Met) + L-methionine + ATP = L-methionyl-tRNA(Met) + AMP + diphosphate</text>
        <dbReference type="Rhea" id="RHEA:13481"/>
        <dbReference type="Rhea" id="RHEA-COMP:9667"/>
        <dbReference type="Rhea" id="RHEA-COMP:9698"/>
        <dbReference type="ChEBI" id="CHEBI:30616"/>
        <dbReference type="ChEBI" id="CHEBI:33019"/>
        <dbReference type="ChEBI" id="CHEBI:57844"/>
        <dbReference type="ChEBI" id="CHEBI:78442"/>
        <dbReference type="ChEBI" id="CHEBI:78530"/>
        <dbReference type="ChEBI" id="CHEBI:456215"/>
        <dbReference type="EC" id="6.1.1.10"/>
    </reaction>
</comment>
<comment type="cofactor">
    <cofactor evidence="1">
        <name>Zn(2+)</name>
        <dbReference type="ChEBI" id="CHEBI:29105"/>
    </cofactor>
    <text evidence="1">Binds 1 zinc ion per subunit.</text>
</comment>
<comment type="subunit">
    <text evidence="1">Homodimer.</text>
</comment>
<comment type="subcellular location">
    <subcellularLocation>
        <location evidence="1">Cytoplasm</location>
    </subcellularLocation>
</comment>
<comment type="similarity">
    <text evidence="1">Belongs to the class-I aminoacyl-tRNA synthetase family. MetG type 1 subfamily.</text>
</comment>
<evidence type="ECO:0000255" key="1">
    <source>
        <dbReference type="HAMAP-Rule" id="MF_00098"/>
    </source>
</evidence>
<accession>Q21I21</accession>